<protein>
    <recommendedName>
        <fullName evidence="1">33 kDa chaperonin</fullName>
    </recommendedName>
    <alternativeName>
        <fullName evidence="1">Heat shock protein 33 homolog</fullName>
        <shortName evidence="1">HSP33</shortName>
    </alternativeName>
</protein>
<comment type="function">
    <text evidence="1">Redox regulated molecular chaperone. Protects both thermally unfolding and oxidatively damaged proteins from irreversible aggregation. Plays an important role in the bacterial defense system toward oxidative stress.</text>
</comment>
<comment type="subcellular location">
    <subcellularLocation>
        <location evidence="1">Cytoplasm</location>
    </subcellularLocation>
</comment>
<comment type="PTM">
    <text evidence="1">Under oxidizing conditions two disulfide bonds are formed involving the reactive cysteines. Under reducing conditions zinc is bound to the reactive cysteines and the protein is inactive.</text>
</comment>
<comment type="similarity">
    <text evidence="1">Belongs to the HSP33 family.</text>
</comment>
<gene>
    <name evidence="1" type="primary">hslO</name>
    <name type="ordered locus">STH1358</name>
</gene>
<proteinExistence type="inferred from homology"/>
<dbReference type="EMBL" id="AP006840">
    <property type="protein sequence ID" value="BAD40343.1"/>
    <property type="molecule type" value="Genomic_DNA"/>
</dbReference>
<dbReference type="SMR" id="Q67PQ0"/>
<dbReference type="STRING" id="292459.STH1358"/>
<dbReference type="KEGG" id="sth:STH1358"/>
<dbReference type="eggNOG" id="COG1281">
    <property type="taxonomic scope" value="Bacteria"/>
</dbReference>
<dbReference type="HOGENOM" id="CLU_054493_1_0_9"/>
<dbReference type="OrthoDB" id="9776534at2"/>
<dbReference type="Proteomes" id="UP000000417">
    <property type="component" value="Chromosome"/>
</dbReference>
<dbReference type="GO" id="GO:0005737">
    <property type="term" value="C:cytoplasm"/>
    <property type="evidence" value="ECO:0007669"/>
    <property type="project" value="UniProtKB-SubCell"/>
</dbReference>
<dbReference type="GO" id="GO:0044183">
    <property type="term" value="F:protein folding chaperone"/>
    <property type="evidence" value="ECO:0007669"/>
    <property type="project" value="TreeGrafter"/>
</dbReference>
<dbReference type="GO" id="GO:0051082">
    <property type="term" value="F:unfolded protein binding"/>
    <property type="evidence" value="ECO:0007669"/>
    <property type="project" value="UniProtKB-UniRule"/>
</dbReference>
<dbReference type="GO" id="GO:0042026">
    <property type="term" value="P:protein refolding"/>
    <property type="evidence" value="ECO:0007669"/>
    <property type="project" value="TreeGrafter"/>
</dbReference>
<dbReference type="CDD" id="cd00498">
    <property type="entry name" value="Hsp33"/>
    <property type="match status" value="1"/>
</dbReference>
<dbReference type="Gene3D" id="3.55.30.10">
    <property type="entry name" value="Hsp33 domain"/>
    <property type="match status" value="1"/>
</dbReference>
<dbReference type="Gene3D" id="3.90.1280.10">
    <property type="entry name" value="HSP33 redox switch-like"/>
    <property type="match status" value="1"/>
</dbReference>
<dbReference type="HAMAP" id="MF_00117">
    <property type="entry name" value="HslO"/>
    <property type="match status" value="1"/>
</dbReference>
<dbReference type="InterPro" id="IPR000397">
    <property type="entry name" value="Heat_shock_Hsp33"/>
</dbReference>
<dbReference type="InterPro" id="IPR016154">
    <property type="entry name" value="Heat_shock_Hsp33_C"/>
</dbReference>
<dbReference type="InterPro" id="IPR016153">
    <property type="entry name" value="Heat_shock_Hsp33_N"/>
</dbReference>
<dbReference type="NCBIfam" id="NF001033">
    <property type="entry name" value="PRK00114.1"/>
    <property type="match status" value="1"/>
</dbReference>
<dbReference type="PANTHER" id="PTHR30111">
    <property type="entry name" value="33 KDA CHAPERONIN"/>
    <property type="match status" value="1"/>
</dbReference>
<dbReference type="PANTHER" id="PTHR30111:SF1">
    <property type="entry name" value="33 KDA CHAPERONIN"/>
    <property type="match status" value="1"/>
</dbReference>
<dbReference type="Pfam" id="PF01430">
    <property type="entry name" value="HSP33"/>
    <property type="match status" value="1"/>
</dbReference>
<dbReference type="PIRSF" id="PIRSF005261">
    <property type="entry name" value="Heat_shock_Hsp33"/>
    <property type="match status" value="1"/>
</dbReference>
<dbReference type="SUPFAM" id="SSF64397">
    <property type="entry name" value="Hsp33 domain"/>
    <property type="match status" value="1"/>
</dbReference>
<dbReference type="SUPFAM" id="SSF118352">
    <property type="entry name" value="HSP33 redox switch-like"/>
    <property type="match status" value="1"/>
</dbReference>
<feature type="chain" id="PRO_0000238101" description="33 kDa chaperonin">
    <location>
        <begin position="1"/>
        <end position="295"/>
    </location>
</feature>
<feature type="disulfide bond" description="Redox-active" evidence="1">
    <location>
        <begin position="237"/>
        <end position="239"/>
    </location>
</feature>
<feature type="disulfide bond" description="Redox-active" evidence="1">
    <location>
        <begin position="270"/>
        <end position="273"/>
    </location>
</feature>
<organism>
    <name type="scientific">Symbiobacterium thermophilum (strain DSM 24528 / JCM 14929 / IAM 14863 / T)</name>
    <dbReference type="NCBI Taxonomy" id="292459"/>
    <lineage>
        <taxon>Bacteria</taxon>
        <taxon>Bacillati</taxon>
        <taxon>Bacillota</taxon>
        <taxon>Clostridia</taxon>
        <taxon>Eubacteriales</taxon>
        <taxon>Symbiobacteriaceae</taxon>
        <taxon>Symbiobacterium</taxon>
    </lineage>
</organism>
<reference key="1">
    <citation type="journal article" date="2004" name="Nucleic Acids Res.">
        <title>Genome sequence of Symbiobacterium thermophilum, an uncultivable bacterium that depends on microbial commensalism.</title>
        <authorList>
            <person name="Ueda K."/>
            <person name="Yamashita A."/>
            <person name="Ishikawa J."/>
            <person name="Shimada M."/>
            <person name="Watsuji T."/>
            <person name="Morimura K."/>
            <person name="Ikeda H."/>
            <person name="Hattori M."/>
            <person name="Beppu T."/>
        </authorList>
    </citation>
    <scope>NUCLEOTIDE SEQUENCE [LARGE SCALE GENOMIC DNA]</scope>
    <source>
        <strain>DSM 24528 / JCM 14929 / IAM 14863 / T</strain>
    </source>
</reference>
<evidence type="ECO:0000255" key="1">
    <source>
        <dbReference type="HAMAP-Rule" id="MF_00117"/>
    </source>
</evidence>
<keyword id="KW-0143">Chaperone</keyword>
<keyword id="KW-0963">Cytoplasm</keyword>
<keyword id="KW-1015">Disulfide bond</keyword>
<keyword id="KW-0676">Redox-active center</keyword>
<keyword id="KW-1185">Reference proteome</keyword>
<keyword id="KW-0862">Zinc</keyword>
<sequence>MADYLVRAIGAGGNVRAFAAVTTALTEEARRRHDTWPVATAALGRALTGTALLAATLKDPNESLTLRVAGDGPLRGILCDADEQGHVRGYVTEPHVDLEPAARGKLNVGAAVGTGMLYVTRQLALQGIYTGSSELVSGEIAEDLAYYLTRSEQTPSAVGLGVRVGPDGAVVAAGGYMVQLLPATPDADRDRLEENLGRLGSVSLAVEQGMTPEEILSVVLTGIDYQILERRDLSFPCRCSRERALGAIALLDETELSGLVEEGRGAELTCHFCNAVYRFSPEEVLQVQRGMKDKQ</sequence>
<name>HSLO_SYMTH</name>
<accession>Q67PQ0</accession>